<proteinExistence type="evidence at transcript level"/>
<keyword id="KW-1015">Disulfide bond</keyword>
<keyword id="KW-0166">Nematocyst</keyword>
<keyword id="KW-0646">Protease inhibitor</keyword>
<keyword id="KW-0964">Secreted</keyword>
<keyword id="KW-0732">Signal</keyword>
<keyword id="KW-0789">Thiol protease inhibitor</keyword>
<protein>
    <recommendedName>
        <fullName>Cystatin J</fullName>
    </recommendedName>
</protein>
<evidence type="ECO:0000250" key="1"/>
<evidence type="ECO:0000255" key="2"/>
<evidence type="ECO:0000269" key="3">
    <source>
    </source>
</evidence>
<evidence type="ECO:0000305" key="4"/>
<evidence type="ECO:0000305" key="5">
    <source>
    </source>
</evidence>
<organism>
    <name type="scientific">Cyanea capillata</name>
    <name type="common">Lion's mane jellyfish</name>
    <name type="synonym">Cyanea arctica</name>
    <dbReference type="NCBI Taxonomy" id="27804"/>
    <lineage>
        <taxon>Eukaryota</taxon>
        <taxon>Metazoa</taxon>
        <taxon>Cnidaria</taxon>
        <taxon>Scyphozoa</taxon>
        <taxon>Semaeostomeae</taxon>
        <taxon>Cyaneidae</taxon>
        <taxon>Cyanea</taxon>
    </lineage>
</organism>
<dbReference type="EMBL" id="AY167572">
    <property type="protein sequence ID" value="AAO38706.1"/>
    <property type="molecule type" value="mRNA"/>
</dbReference>
<dbReference type="SMR" id="Q331K1"/>
<dbReference type="GO" id="GO:0005615">
    <property type="term" value="C:extracellular space"/>
    <property type="evidence" value="ECO:0007669"/>
    <property type="project" value="TreeGrafter"/>
</dbReference>
<dbReference type="GO" id="GO:0042151">
    <property type="term" value="C:nematocyst"/>
    <property type="evidence" value="ECO:0007669"/>
    <property type="project" value="UniProtKB-SubCell"/>
</dbReference>
<dbReference type="GO" id="GO:0031982">
    <property type="term" value="C:vesicle"/>
    <property type="evidence" value="ECO:0007669"/>
    <property type="project" value="TreeGrafter"/>
</dbReference>
<dbReference type="GO" id="GO:0004869">
    <property type="term" value="F:cysteine-type endopeptidase inhibitor activity"/>
    <property type="evidence" value="ECO:0007669"/>
    <property type="project" value="UniProtKB-KW"/>
</dbReference>
<dbReference type="CDD" id="cd00042">
    <property type="entry name" value="CY"/>
    <property type="match status" value="1"/>
</dbReference>
<dbReference type="Gene3D" id="3.10.450.10">
    <property type="match status" value="1"/>
</dbReference>
<dbReference type="InterPro" id="IPR000010">
    <property type="entry name" value="Cystatin_dom"/>
</dbReference>
<dbReference type="InterPro" id="IPR046350">
    <property type="entry name" value="Cystatin_sf"/>
</dbReference>
<dbReference type="PANTHER" id="PTHR46186">
    <property type="entry name" value="CYSTATIN"/>
    <property type="match status" value="1"/>
</dbReference>
<dbReference type="PANTHER" id="PTHR46186:SF2">
    <property type="entry name" value="CYSTATIN"/>
    <property type="match status" value="1"/>
</dbReference>
<dbReference type="Pfam" id="PF00031">
    <property type="entry name" value="Cystatin"/>
    <property type="match status" value="1"/>
</dbReference>
<dbReference type="SMART" id="SM00043">
    <property type="entry name" value="CY"/>
    <property type="match status" value="1"/>
</dbReference>
<dbReference type="SUPFAM" id="SSF54403">
    <property type="entry name" value="Cystatin/monellin"/>
    <property type="match status" value="1"/>
</dbReference>
<reference key="1">
    <citation type="journal article" date="2003" name="Biochimie">
        <title>cDNA cloning, identification and characterization of a novel cystatin from the tentacle of Cyanea capillata.</title>
        <authorList>
            <person name="Yang Y."/>
            <person name="Cun S."/>
            <person name="Peng L."/>
            <person name="Xie X."/>
            <person name="Wei J."/>
            <person name="Yang W."/>
            <person name="Xu A."/>
        </authorList>
    </citation>
    <scope>NUCLEOTIDE SEQUENCE [MRNA]</scope>
    <scope>FUNCTION</scope>
    <source>
        <tissue>Tentacle</tissue>
    </source>
</reference>
<sequence length="131" mass="14739">MHLYLCVLVCLSIGMANCLLPGGIRRMTDEEIQNDEILLTGVEFAVDKYNSDTNSRLIATNVISATVQVVAGFKYNALIELRPRLCVQDPKTKIATCPLRMNLPTKCSFTFLYQSWVPQKYSMLSTKCLRA</sequence>
<accession>Q331K1</accession>
<name>CYT_CYACP</name>
<feature type="signal peptide" evidence="2">
    <location>
        <begin position="1"/>
        <end position="18"/>
    </location>
</feature>
<feature type="chain" id="PRO_0000423037" description="Cystatin J">
    <location>
        <begin position="19"/>
        <end position="131"/>
    </location>
</feature>
<feature type="domain" description="Cystatin">
    <location>
        <begin position="35"/>
        <end position="109"/>
    </location>
</feature>
<feature type="short sequence motif" description="Secondary area of contact" evidence="1">
    <location>
        <begin position="68"/>
        <end position="72"/>
    </location>
</feature>
<feature type="site" description="Reactive site" evidence="1">
    <location>
        <position position="22"/>
    </location>
</feature>
<feature type="disulfide bond" evidence="1">
    <location>
        <begin position="86"/>
        <end position="97"/>
    </location>
</feature>
<feature type="disulfide bond" evidence="1">
    <location>
        <begin position="107"/>
        <end position="128"/>
    </location>
</feature>
<comment type="function">
    <text evidence="3">This recombinant protein inhibits the C1 cysteine protease papain (Ki is below 0.5 nM).</text>
</comment>
<comment type="subcellular location">
    <subcellularLocation>
        <location>Secreted</location>
    </subcellularLocation>
    <subcellularLocation>
        <location evidence="1">Nematocyst</location>
    </subcellularLocation>
</comment>
<comment type="miscellaneous">
    <text evidence="5">Activity of this protein is stable at pH 4-11 at 4 degrees Celsius, but unstable at neutral pH at &gt;50 degrees Celsius.</text>
</comment>
<comment type="similarity">
    <text evidence="4">Belongs to the cystatin family.</text>
</comment>